<keyword id="KW-0903">Direct protein sequencing</keyword>
<keyword id="KW-1015">Disulfide bond</keyword>
<keyword id="KW-0325">Glycoprotein</keyword>
<keyword id="KW-0646">Protease inhibitor</keyword>
<keyword id="KW-0677">Repeat</keyword>
<keyword id="KW-0964">Secreted</keyword>
<keyword id="KW-0722">Serine protease inhibitor</keyword>
<name>IOVO_CORAL</name>
<feature type="chain" id="PRO_0000073091" description="Ovomucoid">
    <location>
        <begin position="1" status="less than"/>
        <end position="54" status="greater than"/>
    </location>
</feature>
<feature type="domain" description="Kazal-like" evidence="1">
    <location>
        <begin position="4"/>
        <end position="54"/>
    </location>
</feature>
<feature type="site" description="Reactive bond 3">
    <location>
        <begin position="16"/>
        <end position="17"/>
    </location>
</feature>
<feature type="glycosylation site" description="N-linked (GlcNAc...) asparagine">
    <location>
        <position position="43"/>
    </location>
</feature>
<feature type="disulfide bond">
    <location>
        <begin position="6"/>
        <end position="36"/>
    </location>
</feature>
<feature type="disulfide bond">
    <location>
        <begin position="14"/>
        <end position="33"/>
    </location>
</feature>
<feature type="disulfide bond">
    <location>
        <begin position="22"/>
        <end position="54"/>
    </location>
</feature>
<feature type="non-terminal residue">
    <location>
        <position position="1"/>
    </location>
</feature>
<feature type="non-terminal residue">
    <location>
        <position position="54"/>
    </location>
</feature>
<protein>
    <recommendedName>
        <fullName>Ovomucoid</fullName>
    </recommendedName>
</protein>
<accession>P52243</accession>
<organism>
    <name type="scientific">Corvus albus</name>
    <name type="common">Pied crow</name>
    <dbReference type="NCBI Taxonomy" id="30421"/>
    <lineage>
        <taxon>Eukaryota</taxon>
        <taxon>Metazoa</taxon>
        <taxon>Chordata</taxon>
        <taxon>Craniata</taxon>
        <taxon>Vertebrata</taxon>
        <taxon>Euteleostomi</taxon>
        <taxon>Archelosauria</taxon>
        <taxon>Archosauria</taxon>
        <taxon>Dinosauria</taxon>
        <taxon>Saurischia</taxon>
        <taxon>Theropoda</taxon>
        <taxon>Coelurosauria</taxon>
        <taxon>Aves</taxon>
        <taxon>Neognathae</taxon>
        <taxon>Neoaves</taxon>
        <taxon>Telluraves</taxon>
        <taxon>Australaves</taxon>
        <taxon>Passeriformes</taxon>
        <taxon>Corvoidea</taxon>
        <taxon>Corvidae</taxon>
        <taxon>Corvus</taxon>
    </lineage>
</organism>
<comment type="subcellular location">
    <subcellularLocation>
        <location>Secreted</location>
    </subcellularLocation>
</comment>
<comment type="domain">
    <text>Avian ovomucoid consists of three homologous, tandem Kazal family inhibitory domains.</text>
</comment>
<dbReference type="PIR" id="F61589">
    <property type="entry name" value="F61589"/>
</dbReference>
<dbReference type="SMR" id="P52243"/>
<dbReference type="GO" id="GO:0005576">
    <property type="term" value="C:extracellular region"/>
    <property type="evidence" value="ECO:0007669"/>
    <property type="project" value="UniProtKB-SubCell"/>
</dbReference>
<dbReference type="GO" id="GO:0004867">
    <property type="term" value="F:serine-type endopeptidase inhibitor activity"/>
    <property type="evidence" value="ECO:0007669"/>
    <property type="project" value="UniProtKB-KW"/>
</dbReference>
<dbReference type="CDD" id="cd00104">
    <property type="entry name" value="KAZAL_FS"/>
    <property type="match status" value="1"/>
</dbReference>
<dbReference type="FunFam" id="3.30.60.30:FF:000037">
    <property type="entry name" value="Ovomucoid"/>
    <property type="match status" value="1"/>
</dbReference>
<dbReference type="Gene3D" id="3.30.60.30">
    <property type="match status" value="1"/>
</dbReference>
<dbReference type="InterPro" id="IPR051597">
    <property type="entry name" value="Bifunctional_prot_inhibitor"/>
</dbReference>
<dbReference type="InterPro" id="IPR002350">
    <property type="entry name" value="Kazal_dom"/>
</dbReference>
<dbReference type="InterPro" id="IPR036058">
    <property type="entry name" value="Kazal_dom_sf"/>
</dbReference>
<dbReference type="InterPro" id="IPR001239">
    <property type="entry name" value="Prot_inh_Kazal-m"/>
</dbReference>
<dbReference type="PANTHER" id="PTHR47729:SF1">
    <property type="entry name" value="OVOMUCOID-LIKE-RELATED"/>
    <property type="match status" value="1"/>
</dbReference>
<dbReference type="PANTHER" id="PTHR47729">
    <property type="entry name" value="SERINE PEPTIDASE INHIBITOR, KAZAL TYPE 2, TANDEM DUPLICATE 1-RELATED"/>
    <property type="match status" value="1"/>
</dbReference>
<dbReference type="Pfam" id="PF00050">
    <property type="entry name" value="Kazal_1"/>
    <property type="match status" value="1"/>
</dbReference>
<dbReference type="PRINTS" id="PR00290">
    <property type="entry name" value="KAZALINHBTR"/>
</dbReference>
<dbReference type="SMART" id="SM00280">
    <property type="entry name" value="KAZAL"/>
    <property type="match status" value="1"/>
</dbReference>
<dbReference type="SUPFAM" id="SSF100895">
    <property type="entry name" value="Kazal-type serine protease inhibitors"/>
    <property type="match status" value="1"/>
</dbReference>
<dbReference type="PROSITE" id="PS00282">
    <property type="entry name" value="KAZAL_1"/>
    <property type="match status" value="1"/>
</dbReference>
<dbReference type="PROSITE" id="PS51465">
    <property type="entry name" value="KAZAL_2"/>
    <property type="match status" value="1"/>
</dbReference>
<proteinExistence type="evidence at protein level"/>
<sequence>IVTVDCSDYPRPVCTLDYMPLCGSDNKTYSNKCNFCNAVVDSNGTITLSHFGRC</sequence>
<reference key="1">
    <citation type="journal article" date="1993" name="J. Protein Chem.">
        <title>Amino acid sequences of ovomucoid third domains from 27 additional species of birds.</title>
        <authorList>
            <person name="Apostol I."/>
            <person name="Giletto A."/>
            <person name="Komiyama T."/>
            <person name="Zhang W."/>
            <person name="Laskowski M. Jr."/>
        </authorList>
    </citation>
    <scope>PROTEIN SEQUENCE</scope>
</reference>
<evidence type="ECO:0000255" key="1">
    <source>
        <dbReference type="PROSITE-ProRule" id="PRU00798"/>
    </source>
</evidence>